<comment type="function">
    <text evidence="1">Negative regulator of class I heat shock genes (grpE-dnaK-dnaJ and groELS operons). Prevents heat-shock induction of these operons.</text>
</comment>
<comment type="similarity">
    <text evidence="1">Belongs to the HrcA family.</text>
</comment>
<proteinExistence type="inferred from homology"/>
<name>HRCA_RHILW</name>
<feature type="chain" id="PRO_1000092828" description="Heat-inducible transcription repressor HrcA">
    <location>
        <begin position="1"/>
        <end position="362"/>
    </location>
</feature>
<dbReference type="EMBL" id="CP001191">
    <property type="protein sequence ID" value="ACI53310.1"/>
    <property type="molecule type" value="Genomic_DNA"/>
</dbReference>
<dbReference type="RefSeq" id="WP_003570826.1">
    <property type="nucleotide sequence ID" value="NC_011369.1"/>
</dbReference>
<dbReference type="SMR" id="B5ZMW9"/>
<dbReference type="STRING" id="395492.Rleg2_0007"/>
<dbReference type="KEGG" id="rlt:Rleg2_0007"/>
<dbReference type="eggNOG" id="COG1420">
    <property type="taxonomic scope" value="Bacteria"/>
</dbReference>
<dbReference type="HOGENOM" id="CLU_050019_0_0_5"/>
<dbReference type="Proteomes" id="UP000008330">
    <property type="component" value="Chromosome"/>
</dbReference>
<dbReference type="GO" id="GO:0003677">
    <property type="term" value="F:DNA binding"/>
    <property type="evidence" value="ECO:0007669"/>
    <property type="project" value="InterPro"/>
</dbReference>
<dbReference type="GO" id="GO:0045892">
    <property type="term" value="P:negative regulation of DNA-templated transcription"/>
    <property type="evidence" value="ECO:0007669"/>
    <property type="project" value="UniProtKB-UniRule"/>
</dbReference>
<dbReference type="Gene3D" id="3.30.450.40">
    <property type="match status" value="1"/>
</dbReference>
<dbReference type="Gene3D" id="3.30.390.60">
    <property type="entry name" value="Heat-inducible transcription repressor hrca homolog, domain 3"/>
    <property type="match status" value="1"/>
</dbReference>
<dbReference type="Gene3D" id="1.10.10.10">
    <property type="entry name" value="Winged helix-like DNA-binding domain superfamily/Winged helix DNA-binding domain"/>
    <property type="match status" value="1"/>
</dbReference>
<dbReference type="HAMAP" id="MF_00081">
    <property type="entry name" value="HrcA"/>
    <property type="match status" value="1"/>
</dbReference>
<dbReference type="InterPro" id="IPR029016">
    <property type="entry name" value="GAF-like_dom_sf"/>
</dbReference>
<dbReference type="InterPro" id="IPR002571">
    <property type="entry name" value="HrcA"/>
</dbReference>
<dbReference type="InterPro" id="IPR021153">
    <property type="entry name" value="HrcA_C"/>
</dbReference>
<dbReference type="InterPro" id="IPR036388">
    <property type="entry name" value="WH-like_DNA-bd_sf"/>
</dbReference>
<dbReference type="InterPro" id="IPR036390">
    <property type="entry name" value="WH_DNA-bd_sf"/>
</dbReference>
<dbReference type="InterPro" id="IPR023120">
    <property type="entry name" value="WHTH_transcript_rep_HrcA_IDD"/>
</dbReference>
<dbReference type="NCBIfam" id="TIGR00331">
    <property type="entry name" value="hrcA"/>
    <property type="match status" value="1"/>
</dbReference>
<dbReference type="PANTHER" id="PTHR34824">
    <property type="entry name" value="HEAT-INDUCIBLE TRANSCRIPTION REPRESSOR HRCA"/>
    <property type="match status" value="1"/>
</dbReference>
<dbReference type="PANTHER" id="PTHR34824:SF1">
    <property type="entry name" value="HEAT-INDUCIBLE TRANSCRIPTION REPRESSOR HRCA"/>
    <property type="match status" value="1"/>
</dbReference>
<dbReference type="Pfam" id="PF01628">
    <property type="entry name" value="HrcA"/>
    <property type="match status" value="1"/>
</dbReference>
<dbReference type="PIRSF" id="PIRSF005485">
    <property type="entry name" value="HrcA"/>
    <property type="match status" value="1"/>
</dbReference>
<dbReference type="SUPFAM" id="SSF55781">
    <property type="entry name" value="GAF domain-like"/>
    <property type="match status" value="1"/>
</dbReference>
<dbReference type="SUPFAM" id="SSF46785">
    <property type="entry name" value="Winged helix' DNA-binding domain"/>
    <property type="match status" value="1"/>
</dbReference>
<sequence length="362" mass="39432">MGIRSTSVSDAVAALDERSREIFRRIVEGYLESGEPLGSRNLSRLLPMSLSPASVRNVMSDLEDLGLIYSPHISAGRLPTQIGLRFFVDAFMQVGDLSAEDRASIDRQVRAESGGNPVESMMNEASRMLSGISRGAGLVITSKSDPVLKHVEFIRLEPTKALAVLVGDHDQVENRIIELPAGVTSSQLAEAANFLNAHMSGQTLPELRKQLSQLKDNVRHELDALSRDLVERGIAVWAGSPDEGKPAQLIIRGRANLLEGLAGAEDLDRLRLLFDDLEKKDSLIEILNLAETGSGVRIFIGSENKLFSLSGSSLIVAPYRDDDDRIVGAVGVIGPTRLNYSRIVPMVDYTAQLVSRLSRNPL</sequence>
<protein>
    <recommendedName>
        <fullName evidence="1">Heat-inducible transcription repressor HrcA</fullName>
    </recommendedName>
</protein>
<gene>
    <name evidence="1" type="primary">hrcA</name>
    <name type="ordered locus">Rleg2_0007</name>
</gene>
<reference key="1">
    <citation type="journal article" date="2010" name="Stand. Genomic Sci.">
        <title>Complete genome sequence of Rhizobium leguminosarum bv trifolii strain WSM2304, an effective microsymbiont of the South American clover Trifolium polymorphum.</title>
        <authorList>
            <person name="Reeve W."/>
            <person name="O'Hara G."/>
            <person name="Chain P."/>
            <person name="Ardley J."/>
            <person name="Brau L."/>
            <person name="Nandesena K."/>
            <person name="Tiwari R."/>
            <person name="Malfatti S."/>
            <person name="Kiss H."/>
            <person name="Lapidus A."/>
            <person name="Copeland A."/>
            <person name="Nolan M."/>
            <person name="Land M."/>
            <person name="Ivanova N."/>
            <person name="Mavromatis K."/>
            <person name="Markowitz V."/>
            <person name="Kyrpides N."/>
            <person name="Melino V."/>
            <person name="Denton M."/>
            <person name="Yates R."/>
            <person name="Howieson J."/>
        </authorList>
    </citation>
    <scope>NUCLEOTIDE SEQUENCE [LARGE SCALE GENOMIC DNA]</scope>
    <source>
        <strain>WSM2304</strain>
    </source>
</reference>
<organism>
    <name type="scientific">Rhizobium leguminosarum bv. trifolii (strain WSM2304)</name>
    <dbReference type="NCBI Taxonomy" id="395492"/>
    <lineage>
        <taxon>Bacteria</taxon>
        <taxon>Pseudomonadati</taxon>
        <taxon>Pseudomonadota</taxon>
        <taxon>Alphaproteobacteria</taxon>
        <taxon>Hyphomicrobiales</taxon>
        <taxon>Rhizobiaceae</taxon>
        <taxon>Rhizobium/Agrobacterium group</taxon>
        <taxon>Rhizobium</taxon>
    </lineage>
</organism>
<keyword id="KW-1185">Reference proteome</keyword>
<keyword id="KW-0678">Repressor</keyword>
<keyword id="KW-0346">Stress response</keyword>
<keyword id="KW-0804">Transcription</keyword>
<keyword id="KW-0805">Transcription regulation</keyword>
<accession>B5ZMW9</accession>
<evidence type="ECO:0000255" key="1">
    <source>
        <dbReference type="HAMAP-Rule" id="MF_00081"/>
    </source>
</evidence>